<feature type="peptide" id="PRO_0000044860" description="Delta-actitoxin-Avd2a" evidence="3">
    <location>
        <begin position="1"/>
        <end position="27"/>
    </location>
</feature>
<feature type="disulfide bond" evidence="5 6">
    <location>
        <begin position="3"/>
        <end position="17"/>
    </location>
</feature>
<feature type="disulfide bond" evidence="5 6">
    <location>
        <begin position="4"/>
        <end position="11"/>
    </location>
</feature>
<feature type="disulfide bond" evidence="5 6">
    <location>
        <begin position="6"/>
        <end position="22"/>
    </location>
</feature>
<feature type="mutagenesis site" description="Low decrease in binding affinity to cockroach neuronal membranes and in toxicity to blowfly larvae." evidence="1">
    <original>R</original>
    <variation>A</variation>
    <location>
        <position position="1"/>
    </location>
</feature>
<feature type="mutagenesis site" description="No change in binding affinity to cockroach neuronal membranes and in toxicity to blowfly larvae." evidence="1">
    <original>S</original>
    <variation>A</variation>
    <location>
        <position position="2"/>
    </location>
</feature>
<feature type="mutagenesis site" description="Low decrease in binding affinity to cockroach neuronal membranes and in toxicity to blowfly larvae." evidence="1">
    <original>P</original>
    <variation>A</variation>
    <location>
        <position position="5"/>
    </location>
</feature>
<feature type="mutagenesis site" description="Loss of binding affinity to cockroach neuronal membranes and of toxicity to blowfly larvae." evidence="1">
    <original>Y</original>
    <variation>A</variation>
    <location>
        <position position="7"/>
    </location>
</feature>
<feature type="mutagenesis site" description="Loss of binding affinity to cockroach neuronal membranes and of toxicity to blowfly larvae." evidence="1">
    <original>W</original>
    <variation>A</variation>
    <location>
        <position position="8"/>
    </location>
</feature>
<feature type="mutagenesis site" description="Loss of binding affinity to cockroach neuronal membranes and of toxicity to blowfly larvae." evidence="1">
    <original>P</original>
    <variation>A</variation>
    <location>
        <position position="12"/>
    </location>
</feature>
<feature type="mutagenesis site" description="Loss of binding affinity to cockroach neuronal membranes and of toxicity to blowfly larvae." evidence="1">
    <original>W</original>
    <variation>A</variation>
    <location>
        <position position="13"/>
    </location>
</feature>
<feature type="mutagenesis site" description="No change in binding affinity to cockroach neuronal membranes and in toxicity to blowfly larvae." evidence="1">
    <original>Q</original>
    <variation>A</variation>
    <location>
        <position position="15"/>
    </location>
</feature>
<feature type="mutagenesis site" description="No change in binding affinity to cockroach neuronal membranes and in toxicity to blowfly larvae." evidence="1">
    <original>N</original>
    <variation>A</variation>
    <location>
        <position position="16"/>
    </location>
</feature>
<feature type="mutagenesis site" description="Loss of binding affinity to cockroach neuronal membranes and of toxicity to blowfly larvae." evidence="1">
    <original>Y</original>
    <variation>A</variation>
    <location>
        <position position="18"/>
    </location>
</feature>
<feature type="mutagenesis site" description="Low decrease in binding affinity to cockroach neuronal membranes and in toxicity to blowfly larvae." evidence="1">
    <original>P</original>
    <variation>A</variation>
    <location>
        <position position="19"/>
    </location>
</feature>
<feature type="mutagenesis site" description="Low increase in binding affinity to cockroach neuronal membranes and in toxicity to blowfly larvae." evidence="1">
    <original>E</original>
    <variation>A</variation>
    <location>
        <position position="20"/>
    </location>
</feature>
<feature type="mutagenesis site" description="Low increase in binding affinity to cockroach neuronal membranes and in toxicity to blowfly larvae." evidence="1">
    <original>S</original>
    <variation>A</variation>
    <location>
        <position position="23"/>
    </location>
</feature>
<feature type="mutagenesis site" description="Low increase in binding affinity to cockroach neuronal membranes and in toxicity to blowfly larvae." evidence="1">
    <original>P</original>
    <variation>A</variation>
    <location>
        <position position="25"/>
    </location>
</feature>
<feature type="mutagenesis site" description="No change in binding affinity to cockroach neuronal membranes and in toxicity to blowfly larvae." evidence="1">
    <original>K</original>
    <variation>A</variation>
    <location>
        <position position="26"/>
    </location>
</feature>
<feature type="mutagenesis site" description="No change in binding affinity to cockroach neuronal membranes and in toxicity to blowfly larvae." evidence="1">
    <original>V</original>
    <variation>A</variation>
    <location>
        <position position="27"/>
    </location>
</feature>
<feature type="sequence conflict" description="In Ref. 2; AA sequence." evidence="12" ref="2">
    <original>CS</original>
    <variation>SC</variation>
    <location>
        <begin position="22"/>
        <end position="23"/>
    </location>
</feature>
<feature type="turn" evidence="13">
    <location>
        <begin position="7"/>
        <end position="10"/>
    </location>
</feature>
<feature type="strand" evidence="13">
    <location>
        <begin position="12"/>
        <end position="14"/>
    </location>
</feature>
<feature type="strand" evidence="13">
    <location>
        <begin position="22"/>
        <end position="25"/>
    </location>
</feature>
<comment type="function">
    <text evidence="1 2 4">Specific arthropod (crab and insect) toxin that inhibits inactivation of voltage-gated sodium channels. It competes well with the site-3 toxin LqhalphaIT (from the scorpion L.quinquestriatus (AC P17728)) on binding to cockroach neuronal membranes (Ki=21.4 nM), and inhibits the inactivation of D.melanogaster channel (DmNav1), but not that of mammalian Navs expressed in Xenopus oocytes. Its activity is synergically enhanced by ligands of receptor site-4 (Bj-xtrIT (AC P56637)). Its ability to inhibit the channel mutant DmNav1[D1701R] only decreases 5-fold, whereas the inhibition activity is completely lost by LqhalphaIT and Av2 when tested on DmNav1[D1701R].</text>
</comment>
<comment type="subcellular location">
    <subcellularLocation>
        <location evidence="12">Secreted</location>
    </subcellularLocation>
    <subcellularLocation>
        <location evidence="12">Nematocyst</location>
    </subcellularLocation>
</comment>
<comment type="toxic dose">
    <text evidence="1">PD(50) is 1.15 pmol/100 mg (native toxin) or PD(50) is 2.65 pmol/100 mg (recombinant toxin) when injected inter-segmentally into blowfly larvae (S.falculata).</text>
</comment>
<comment type="miscellaneous">
    <text evidence="1">Negative results: is inactive on mammals, when tested by subcutaneous injection into mice at a high dose (up to 5940 nmol/kg of mouse). Does not inhibit rNav1.2/SCN2A, rNav1.4/SCN4A, hNav1.5/SCN5A and rNav1.6/SCN8A.</text>
</comment>
<comment type="similarity">
    <text evidence="12">Belongs to the sea anemone short toxin (type III) family.</text>
</comment>
<comment type="caution">
    <text evidence="12">Opinions are divided on whether Anemonia viridis (Forsskal, 1775) and Anemonia sulcata (Pennant, 1777) are separate species. Authors from PubMed:17492942 and PubMed:19609479 consider they are only one species, it is why their studies (on A.viridis) are integrated in this entry on A.sulcata.</text>
</comment>
<proteinExistence type="evidence at protein level"/>
<name>STX3_ANESU</name>
<organism>
    <name type="scientific">Anemonia sulcata</name>
    <name type="common">Mediterranean snakelocks sea anemone</name>
    <dbReference type="NCBI Taxonomy" id="6108"/>
    <lineage>
        <taxon>Eukaryota</taxon>
        <taxon>Metazoa</taxon>
        <taxon>Cnidaria</taxon>
        <taxon>Anthozoa</taxon>
        <taxon>Hexacorallia</taxon>
        <taxon>Actiniaria</taxon>
        <taxon>Actiniidae</taxon>
        <taxon>Anemonia</taxon>
    </lineage>
</organism>
<sequence length="27" mass="2938">RSCCPCYWGGCPWGQNCYPEGCSGPKV</sequence>
<protein>
    <recommendedName>
        <fullName evidence="8">Delta-actitoxin-Avd2a</fullName>
        <shortName evidence="8">Delta-AITX-Avd2a</shortName>
    </recommendedName>
    <alternativeName>
        <fullName evidence="9">ATX III</fullName>
    </alternativeName>
    <alternativeName>
        <fullName evidence="7">Av3</fullName>
    </alternativeName>
    <alternativeName>
        <fullName>Neurotoxin 3</fullName>
    </alternativeName>
    <alternativeName>
        <fullName evidence="10 11">Neurotoxin III</fullName>
    </alternativeName>
</protein>
<keyword id="KW-0002">3D-structure</keyword>
<keyword id="KW-0903">Direct protein sequencing</keyword>
<keyword id="KW-1015">Disulfide bond</keyword>
<keyword id="KW-0872">Ion channel impairing toxin</keyword>
<keyword id="KW-0166">Nematocyst</keyword>
<keyword id="KW-0528">Neurotoxin</keyword>
<keyword id="KW-0964">Secreted</keyword>
<keyword id="KW-0800">Toxin</keyword>
<keyword id="KW-0738">Voltage-gated sodium channel impairing toxin</keyword>
<accession>P01535</accession>
<dbReference type="PIR" id="A91446">
    <property type="entry name" value="TZAZ3"/>
</dbReference>
<dbReference type="PDB" id="1ANS">
    <property type="method" value="NMR"/>
    <property type="chains" value="A=1-27"/>
</dbReference>
<dbReference type="PDBsum" id="1ANS"/>
<dbReference type="BMRB" id="P01535"/>
<dbReference type="SMR" id="P01535"/>
<dbReference type="EvolutionaryTrace" id="P01535"/>
<dbReference type="GO" id="GO:0005576">
    <property type="term" value="C:extracellular region"/>
    <property type="evidence" value="ECO:0007669"/>
    <property type="project" value="UniProtKB-SubCell"/>
</dbReference>
<dbReference type="GO" id="GO:0042151">
    <property type="term" value="C:nematocyst"/>
    <property type="evidence" value="ECO:0007669"/>
    <property type="project" value="UniProtKB-SubCell"/>
</dbReference>
<dbReference type="GO" id="GO:0019871">
    <property type="term" value="F:sodium channel inhibitor activity"/>
    <property type="evidence" value="ECO:0007669"/>
    <property type="project" value="InterPro"/>
</dbReference>
<dbReference type="GO" id="GO:0090729">
    <property type="term" value="F:toxin activity"/>
    <property type="evidence" value="ECO:0007669"/>
    <property type="project" value="UniProtKB-KW"/>
</dbReference>
<dbReference type="InterPro" id="IPR016330">
    <property type="entry name" value="Neurotoxin_3_Actiniidae"/>
</dbReference>
<dbReference type="InterPro" id="IPR012509">
    <property type="entry name" value="Neurotoxin_3_Anemonia"/>
</dbReference>
<dbReference type="InterPro" id="IPR036247">
    <property type="entry name" value="Neurotoxin_3_sf"/>
</dbReference>
<dbReference type="Pfam" id="PF08098">
    <property type="entry name" value="ATX_III"/>
    <property type="match status" value="1"/>
</dbReference>
<dbReference type="PIRSF" id="PIRSF001906">
    <property type="entry name" value="Neurotoxin_III_Actiniidae"/>
    <property type="match status" value="1"/>
</dbReference>
<dbReference type="SUPFAM" id="SSF57419">
    <property type="entry name" value="Neurotoxin III (ATX III)"/>
    <property type="match status" value="1"/>
</dbReference>
<evidence type="ECO:0000269" key="1">
    <source>
    </source>
</evidence>
<evidence type="ECO:0000269" key="2">
    <source>
    </source>
</evidence>
<evidence type="ECO:0000269" key="3">
    <source>
    </source>
</evidence>
<evidence type="ECO:0000269" key="4">
    <source>
    </source>
</evidence>
<evidence type="ECO:0000269" key="5">
    <source>
    </source>
</evidence>
<evidence type="ECO:0000269" key="6">
    <source>
    </source>
</evidence>
<evidence type="ECO:0000303" key="7">
    <source>
    </source>
</evidence>
<evidence type="ECO:0000303" key="8">
    <source>
    </source>
</evidence>
<evidence type="ECO:0000303" key="9">
    <source>
    </source>
</evidence>
<evidence type="ECO:0000303" key="10">
    <source>
    </source>
</evidence>
<evidence type="ECO:0000303" key="11">
    <source>
    </source>
</evidence>
<evidence type="ECO:0000305" key="12"/>
<evidence type="ECO:0007829" key="13">
    <source>
        <dbReference type="PDB" id="1ANS"/>
    </source>
</evidence>
<reference key="1">
    <citation type="journal article" date="1977" name="FEBS Lett.">
        <title>Toxin III from Anemonia sulcata: primary structure.</title>
        <authorList>
            <person name="Martinez G."/>
            <person name="Kopeyan C."/>
            <person name="Schweitz H."/>
            <person name="Lazdunski M."/>
        </authorList>
    </citation>
    <scope>PROTEIN SEQUENCE</scope>
    <source>
        <tissue>Nematoblast</tissue>
    </source>
</reference>
<reference key="2">
    <citation type="journal article" date="1977" name="Hoppe-Seyler's Z. Physiol. Chem.">
        <title>Amino acid sequence of toxin III from Anemonia sulcata.</title>
        <authorList>
            <person name="Beress L."/>
            <person name="Wunderer G."/>
            <person name="Wachter E."/>
        </authorList>
    </citation>
    <scope>PRELIMINARY PROTEIN SEQUENCE</scope>
</reference>
<reference key="3">
    <citation type="journal article" date="1985" name="Pflugers Arch.">
        <title>Anemonia sulcata toxins modify activation and inactivation of Na+ currents in a crayfish neurone.</title>
        <authorList>
            <person name="Hartung K."/>
            <person name="Rathmayer W."/>
        </authorList>
    </citation>
    <scope>FUNCTION</scope>
</reference>
<reference key="4">
    <citation type="journal article" date="2007" name="Biochem. J.">
        <title>Molecular analysis of the sea anemone toxin Av3 reveals selectivity to insects and demonstrates the heterogeneity of receptor site-3 on voltage-gated Na+ channels.</title>
        <authorList>
            <person name="Moran Y."/>
            <person name="Kahn R."/>
            <person name="Cohen L."/>
            <person name="Gur M."/>
            <person name="Karbat I."/>
            <person name="Gordon D."/>
            <person name="Gurevitz M."/>
        </authorList>
    </citation>
    <scope>FUNCTION</scope>
    <scope>TOXIC DOSE</scope>
    <scope>MUTAGENESIS OF ARG-1; SER-2; PRO-5; TYR-7; TRP-8; PRO-12; TRP-13; GLN-15; ASN-16; TYR-18; PRO-19; GLU-20; SER-23; PRO-25; LYS-26 AND VAL-27</scope>
</reference>
<reference key="5">
    <citation type="journal article" date="2009" name="J. Mol. Evol.">
        <title>Fusion and retrotransposition events in the evolution of the sea anemone Anemonia viridis neurotoxin genes.</title>
        <authorList>
            <person name="Moran Y."/>
            <person name="Weinberger H."/>
            <person name="Lazarus N."/>
            <person name="Gur M."/>
            <person name="Kahn R."/>
            <person name="Gordon D."/>
            <person name="Gurevitz M."/>
        </authorList>
    </citation>
    <scope>FUNCTION</scope>
</reference>
<reference key="6">
    <citation type="journal article" date="2012" name="Toxicon">
        <title>Development of a rational nomenclature for naming peptide and protein toxins from sea anemones.</title>
        <authorList>
            <person name="Oliveira J.S."/>
            <person name="Fuentes-Silva D."/>
            <person name="King G.F."/>
        </authorList>
    </citation>
    <scope>NOMENCLATURE</scope>
</reference>
<reference key="7">
    <citation type="journal article" date="1993" name="Biochem. J.">
        <title>1H-NMR study of the solution properties and secondary structure of neurotoxin III from the sea anemone Anemonia sulcata.</title>
        <authorList>
            <person name="Norton R.S."/>
            <person name="Cross K."/>
            <person name="Braach-Maksvytis V."/>
            <person name="Wachter E."/>
        </authorList>
    </citation>
    <scope>STRUCTURE BY NMR</scope>
    <scope>DISULFIDE BONDS</scope>
</reference>
<reference key="8">
    <citation type="journal article" date="1994" name="Biochemistry">
        <title>Three-dimensional structure in solution of neurotoxin III from the sea anemone Anemonia sulcata.</title>
        <authorList>
            <person name="Manoleras N."/>
            <person name="Norton R.S."/>
        </authorList>
    </citation>
    <scope>STRUCTURE BY NMR</scope>
    <scope>DISULFIDE BONDS</scope>
</reference>